<gene>
    <name evidence="1" type="primary">rpsH</name>
    <name type="ordered locus">RSal33209_2150</name>
</gene>
<protein>
    <recommendedName>
        <fullName evidence="1">Small ribosomal subunit protein uS8</fullName>
    </recommendedName>
    <alternativeName>
        <fullName evidence="2">30S ribosomal protein S8</fullName>
    </alternativeName>
</protein>
<name>RS8_RENSM</name>
<organism>
    <name type="scientific">Renibacterium salmoninarum (strain ATCC 33209 / DSM 20767 / JCM 11484 / NBRC 15589 / NCIMB 2235)</name>
    <dbReference type="NCBI Taxonomy" id="288705"/>
    <lineage>
        <taxon>Bacteria</taxon>
        <taxon>Bacillati</taxon>
        <taxon>Actinomycetota</taxon>
        <taxon>Actinomycetes</taxon>
        <taxon>Micrococcales</taxon>
        <taxon>Micrococcaceae</taxon>
        <taxon>Renibacterium</taxon>
    </lineage>
</organism>
<reference key="1">
    <citation type="journal article" date="2008" name="J. Bacteriol.">
        <title>Genome sequence of the fish pathogen Renibacterium salmoninarum suggests reductive evolution away from an environmental Arthrobacter ancestor.</title>
        <authorList>
            <person name="Wiens G.D."/>
            <person name="Rockey D.D."/>
            <person name="Wu Z."/>
            <person name="Chang J."/>
            <person name="Levy R."/>
            <person name="Crane S."/>
            <person name="Chen D.S."/>
            <person name="Capri G.R."/>
            <person name="Burnett J.R."/>
            <person name="Sudheesh P.S."/>
            <person name="Schipma M.J."/>
            <person name="Burd H."/>
            <person name="Bhattacharyya A."/>
            <person name="Rhodes L.D."/>
            <person name="Kaul R."/>
            <person name="Strom M.S."/>
        </authorList>
    </citation>
    <scope>NUCLEOTIDE SEQUENCE [LARGE SCALE GENOMIC DNA]</scope>
    <source>
        <strain>ATCC 33209 / DSM 20767 / JCM 11484 / NBRC 15589 / NCIMB 2235</strain>
    </source>
</reference>
<keyword id="KW-1185">Reference proteome</keyword>
<keyword id="KW-0687">Ribonucleoprotein</keyword>
<keyword id="KW-0689">Ribosomal protein</keyword>
<keyword id="KW-0694">RNA-binding</keyword>
<keyword id="KW-0699">rRNA-binding</keyword>
<comment type="function">
    <text evidence="1">One of the primary rRNA binding proteins, it binds directly to 16S rRNA central domain where it helps coordinate assembly of the platform of the 30S subunit.</text>
</comment>
<comment type="subunit">
    <text evidence="1">Part of the 30S ribosomal subunit. Contacts proteins S5 and S12.</text>
</comment>
<comment type="similarity">
    <text evidence="1">Belongs to the universal ribosomal protein uS8 family.</text>
</comment>
<feature type="chain" id="PRO_1000085936" description="Small ribosomal subunit protein uS8">
    <location>
        <begin position="1"/>
        <end position="132"/>
    </location>
</feature>
<sequence>MTMTDPVADMLTRLRNANSAHHDSVKMPFSKLKGHVADILKAEGYIASWKVEDAEVGKSLTIDLKFGPNRERSIAGIRRISKPGLRVYAKSTNLPKVLGGLGVAILSTSSGLLTDRQAAKKGVGGEVLAYVW</sequence>
<proteinExistence type="inferred from homology"/>
<accession>A9WSU4</accession>
<evidence type="ECO:0000255" key="1">
    <source>
        <dbReference type="HAMAP-Rule" id="MF_01302"/>
    </source>
</evidence>
<evidence type="ECO:0000305" key="2"/>
<dbReference type="EMBL" id="CP000910">
    <property type="protein sequence ID" value="ABY23882.1"/>
    <property type="molecule type" value="Genomic_DNA"/>
</dbReference>
<dbReference type="RefSeq" id="WP_012245548.1">
    <property type="nucleotide sequence ID" value="NC_010168.1"/>
</dbReference>
<dbReference type="SMR" id="A9WSU4"/>
<dbReference type="STRING" id="288705.RSal33209_2150"/>
<dbReference type="KEGG" id="rsa:RSal33209_2150"/>
<dbReference type="eggNOG" id="COG0096">
    <property type="taxonomic scope" value="Bacteria"/>
</dbReference>
<dbReference type="HOGENOM" id="CLU_098428_0_1_11"/>
<dbReference type="Proteomes" id="UP000002007">
    <property type="component" value="Chromosome"/>
</dbReference>
<dbReference type="GO" id="GO:1990904">
    <property type="term" value="C:ribonucleoprotein complex"/>
    <property type="evidence" value="ECO:0007669"/>
    <property type="project" value="UniProtKB-KW"/>
</dbReference>
<dbReference type="GO" id="GO:0005840">
    <property type="term" value="C:ribosome"/>
    <property type="evidence" value="ECO:0007669"/>
    <property type="project" value="UniProtKB-KW"/>
</dbReference>
<dbReference type="GO" id="GO:0019843">
    <property type="term" value="F:rRNA binding"/>
    <property type="evidence" value="ECO:0007669"/>
    <property type="project" value="UniProtKB-UniRule"/>
</dbReference>
<dbReference type="GO" id="GO:0003735">
    <property type="term" value="F:structural constituent of ribosome"/>
    <property type="evidence" value="ECO:0007669"/>
    <property type="project" value="InterPro"/>
</dbReference>
<dbReference type="GO" id="GO:0006412">
    <property type="term" value="P:translation"/>
    <property type="evidence" value="ECO:0007669"/>
    <property type="project" value="UniProtKB-UniRule"/>
</dbReference>
<dbReference type="FunFam" id="3.30.1370.30:FF:000002">
    <property type="entry name" value="30S ribosomal protein S8"/>
    <property type="match status" value="1"/>
</dbReference>
<dbReference type="FunFam" id="3.30.1490.10:FF:000001">
    <property type="entry name" value="30S ribosomal protein S8"/>
    <property type="match status" value="1"/>
</dbReference>
<dbReference type="Gene3D" id="3.30.1370.30">
    <property type="match status" value="1"/>
</dbReference>
<dbReference type="Gene3D" id="3.30.1490.10">
    <property type="match status" value="1"/>
</dbReference>
<dbReference type="HAMAP" id="MF_01302_B">
    <property type="entry name" value="Ribosomal_uS8_B"/>
    <property type="match status" value="1"/>
</dbReference>
<dbReference type="InterPro" id="IPR000630">
    <property type="entry name" value="Ribosomal_uS8"/>
</dbReference>
<dbReference type="InterPro" id="IPR047863">
    <property type="entry name" value="Ribosomal_uS8_CS"/>
</dbReference>
<dbReference type="InterPro" id="IPR035987">
    <property type="entry name" value="Ribosomal_uS8_sf"/>
</dbReference>
<dbReference type="NCBIfam" id="NF001109">
    <property type="entry name" value="PRK00136.1"/>
    <property type="match status" value="1"/>
</dbReference>
<dbReference type="PANTHER" id="PTHR11758">
    <property type="entry name" value="40S RIBOSOMAL PROTEIN S15A"/>
    <property type="match status" value="1"/>
</dbReference>
<dbReference type="Pfam" id="PF00410">
    <property type="entry name" value="Ribosomal_S8"/>
    <property type="match status" value="1"/>
</dbReference>
<dbReference type="SUPFAM" id="SSF56047">
    <property type="entry name" value="Ribosomal protein S8"/>
    <property type="match status" value="1"/>
</dbReference>
<dbReference type="PROSITE" id="PS00053">
    <property type="entry name" value="RIBOSOMAL_S8"/>
    <property type="match status" value="1"/>
</dbReference>